<reference key="1">
    <citation type="journal article" date="2011" name="Appl. Environ. Microbiol.">
        <title>Genomic potential of Marinobacter aquaeolei, a biogeochemical 'opportunitroph'.</title>
        <authorList>
            <person name="Singer E."/>
            <person name="Webb E.A."/>
            <person name="Nelson W.C."/>
            <person name="Heidelberg J.F."/>
            <person name="Ivanova N."/>
            <person name="Pati A."/>
            <person name="Edwards K.J."/>
        </authorList>
    </citation>
    <scope>NUCLEOTIDE SEQUENCE [LARGE SCALE GENOMIC DNA]</scope>
    <source>
        <strain>ATCC 700491 / DSM 11845 / VT8</strain>
    </source>
</reference>
<proteinExistence type="inferred from homology"/>
<keyword id="KW-0378">Hydrolase</keyword>
<dbReference type="EC" id="3.5.1.4" evidence="1"/>
<dbReference type="EMBL" id="CP000514">
    <property type="protein sequence ID" value="ABM20930.1"/>
    <property type="molecule type" value="Genomic_DNA"/>
</dbReference>
<dbReference type="RefSeq" id="WP_011787263.1">
    <property type="nucleotide sequence ID" value="NC_008740.1"/>
</dbReference>
<dbReference type="SMR" id="A1U7G1"/>
<dbReference type="STRING" id="351348.Maqu_3862"/>
<dbReference type="KEGG" id="maq:Maqu_3862"/>
<dbReference type="eggNOG" id="COG0388">
    <property type="taxonomic scope" value="Bacteria"/>
</dbReference>
<dbReference type="HOGENOM" id="CLU_071797_0_0_6"/>
<dbReference type="OrthoDB" id="9803803at2"/>
<dbReference type="Proteomes" id="UP000000998">
    <property type="component" value="Chromosome"/>
</dbReference>
<dbReference type="GO" id="GO:0004040">
    <property type="term" value="F:amidase activity"/>
    <property type="evidence" value="ECO:0007669"/>
    <property type="project" value="UniProtKB-UniRule"/>
</dbReference>
<dbReference type="CDD" id="cd07565">
    <property type="entry name" value="aliphatic_amidase"/>
    <property type="match status" value="1"/>
</dbReference>
<dbReference type="FunFam" id="3.60.110.10:FF:000014">
    <property type="entry name" value="Aliphatic amidase"/>
    <property type="match status" value="1"/>
</dbReference>
<dbReference type="Gene3D" id="3.60.110.10">
    <property type="entry name" value="Carbon-nitrogen hydrolase"/>
    <property type="match status" value="1"/>
</dbReference>
<dbReference type="HAMAP" id="MF_01242">
    <property type="entry name" value="Aliphatic_amidase"/>
    <property type="match status" value="1"/>
</dbReference>
<dbReference type="InterPro" id="IPR050345">
    <property type="entry name" value="Aliph_Amidase/BUP"/>
</dbReference>
<dbReference type="InterPro" id="IPR023719">
    <property type="entry name" value="Aliphatic_amidase"/>
</dbReference>
<dbReference type="InterPro" id="IPR003010">
    <property type="entry name" value="C-N_Hydrolase"/>
</dbReference>
<dbReference type="InterPro" id="IPR036526">
    <property type="entry name" value="C-N_Hydrolase_sf"/>
</dbReference>
<dbReference type="NCBIfam" id="NF009802">
    <property type="entry name" value="PRK13286.1"/>
    <property type="match status" value="1"/>
</dbReference>
<dbReference type="PANTHER" id="PTHR43674:SF14">
    <property type="entry name" value="ALIPHATIC AMIDASE"/>
    <property type="match status" value="1"/>
</dbReference>
<dbReference type="PANTHER" id="PTHR43674">
    <property type="entry name" value="NITRILASE C965.09-RELATED"/>
    <property type="match status" value="1"/>
</dbReference>
<dbReference type="Pfam" id="PF00795">
    <property type="entry name" value="CN_hydrolase"/>
    <property type="match status" value="1"/>
</dbReference>
<dbReference type="SUPFAM" id="SSF56317">
    <property type="entry name" value="Carbon-nitrogen hydrolase"/>
    <property type="match status" value="1"/>
</dbReference>
<dbReference type="PROSITE" id="PS50263">
    <property type="entry name" value="CN_HYDROLASE"/>
    <property type="match status" value="1"/>
</dbReference>
<name>AMIE_MARN8</name>
<sequence length="348" mass="38461">MRHGDISSSNDTVGVAVVNYKMPRLHTKAEVLDNARKIADIIKGMKVGLPGMDLVVFPEYSTMGIMYDNDEMMETAATIPGDETAIFSAACREANTWGVFSLTGERHEDHPNKAPYNTLVLINNEGEIVQKYRKCIPWCPIEGWYPGDTTYVTEGPKGMKISLIICDDGNYPEIWRDCAMKGAELIVRCQGYMYPAKEQQIMMAKSMAWANNCYVAVANASGFDGVYSYFGHSAIIGFDGRTLGECGEEDMGVQYAQLSVSQIRDARANDQSQNHLFKLLHRGYTGVHNSGDGDKGVADCPFEFYRTWVMDAQKAQENVEAMTRKTVGTAECPVGELPFDGKEKTAGA</sequence>
<feature type="chain" id="PRO_1000067049" description="Aliphatic amidase">
    <location>
        <begin position="1"/>
        <end position="348"/>
    </location>
</feature>
<feature type="domain" description="CN hydrolase" evidence="2">
    <location>
        <begin position="13"/>
        <end position="260"/>
    </location>
</feature>
<feature type="active site" description="Proton acceptor" evidence="1">
    <location>
        <position position="59"/>
    </location>
</feature>
<feature type="active site" description="Proton donor" evidence="1">
    <location>
        <position position="134"/>
    </location>
</feature>
<feature type="active site" description="Nucleophile" evidence="1">
    <location>
        <position position="166"/>
    </location>
</feature>
<protein>
    <recommendedName>
        <fullName evidence="1">Aliphatic amidase</fullName>
        <ecNumber evidence="1">3.5.1.4</ecNumber>
    </recommendedName>
    <alternativeName>
        <fullName evidence="1">Acylamide amidohydrolase</fullName>
    </alternativeName>
</protein>
<evidence type="ECO:0000255" key="1">
    <source>
        <dbReference type="HAMAP-Rule" id="MF_01242"/>
    </source>
</evidence>
<evidence type="ECO:0000255" key="2">
    <source>
        <dbReference type="PROSITE-ProRule" id="PRU00054"/>
    </source>
</evidence>
<organism>
    <name type="scientific">Marinobacter nauticus (strain ATCC 700491 / DSM 11845 / VT8)</name>
    <name type="common">Marinobacter aquaeolei</name>
    <dbReference type="NCBI Taxonomy" id="351348"/>
    <lineage>
        <taxon>Bacteria</taxon>
        <taxon>Pseudomonadati</taxon>
        <taxon>Pseudomonadota</taxon>
        <taxon>Gammaproteobacteria</taxon>
        <taxon>Pseudomonadales</taxon>
        <taxon>Marinobacteraceae</taxon>
        <taxon>Marinobacter</taxon>
    </lineage>
</organism>
<comment type="function">
    <text evidence="1">Catalyzes the hydrolysis of short-chain aliphatic amides to their corresponding organic acids with release of ammonia.</text>
</comment>
<comment type="function">
    <text evidence="1">Also exhibits in vitro acyl transferase activity, transferring the acyl moiety of short-chain amides to hydroxylamine to form hydroxamates.</text>
</comment>
<comment type="catalytic activity">
    <reaction evidence="1">
        <text>a monocarboxylic acid amide + H2O = a monocarboxylate + NH4(+)</text>
        <dbReference type="Rhea" id="RHEA:12020"/>
        <dbReference type="ChEBI" id="CHEBI:15377"/>
        <dbReference type="ChEBI" id="CHEBI:28938"/>
        <dbReference type="ChEBI" id="CHEBI:35757"/>
        <dbReference type="ChEBI" id="CHEBI:83628"/>
        <dbReference type="EC" id="3.5.1.4"/>
    </reaction>
</comment>
<comment type="similarity">
    <text evidence="1">Belongs to the carbon-nitrogen hydrolase superfamily. Aliphatic amidase family.</text>
</comment>
<gene>
    <name evidence="1" type="primary">amiE</name>
    <name type="ordered locus">Maqu_3862</name>
</gene>
<accession>A1U7G1</accession>